<reference key="1">
    <citation type="submission" date="1996-05" db="EMBL/GenBank/DDBJ databases">
        <authorList>
            <person name="Chu R.C."/>
            <person name="Yang C.-C."/>
        </authorList>
    </citation>
    <scope>NUCLEOTIDE SEQUENCE [MRNA]</scope>
    <source>
        <tissue>Venom gland</tissue>
    </source>
</reference>
<keyword id="KW-0123">Cardiotoxin</keyword>
<keyword id="KW-0204">Cytolysis</keyword>
<keyword id="KW-1015">Disulfide bond</keyword>
<keyword id="KW-0472">Membrane</keyword>
<keyword id="KW-0964">Secreted</keyword>
<keyword id="KW-0732">Signal</keyword>
<keyword id="KW-1052">Target cell membrane</keyword>
<keyword id="KW-1053">Target membrane</keyword>
<keyword id="KW-0800">Toxin</keyword>
<proteinExistence type="inferred from homology"/>
<dbReference type="EMBL" id="U58483">
    <property type="protein sequence ID" value="AAB18379.1"/>
    <property type="molecule type" value="mRNA"/>
</dbReference>
<dbReference type="SMR" id="Q98957"/>
<dbReference type="GO" id="GO:0005576">
    <property type="term" value="C:extracellular region"/>
    <property type="evidence" value="ECO:0007669"/>
    <property type="project" value="UniProtKB-SubCell"/>
</dbReference>
<dbReference type="GO" id="GO:0016020">
    <property type="term" value="C:membrane"/>
    <property type="evidence" value="ECO:0007669"/>
    <property type="project" value="UniProtKB-KW"/>
</dbReference>
<dbReference type="GO" id="GO:0044218">
    <property type="term" value="C:other organism cell membrane"/>
    <property type="evidence" value="ECO:0007669"/>
    <property type="project" value="UniProtKB-KW"/>
</dbReference>
<dbReference type="GO" id="GO:0090729">
    <property type="term" value="F:toxin activity"/>
    <property type="evidence" value="ECO:0007669"/>
    <property type="project" value="UniProtKB-KW"/>
</dbReference>
<dbReference type="GO" id="GO:0031640">
    <property type="term" value="P:killing of cells of another organism"/>
    <property type="evidence" value="ECO:0007669"/>
    <property type="project" value="UniProtKB-KW"/>
</dbReference>
<dbReference type="CDD" id="cd00206">
    <property type="entry name" value="TFP_snake_toxin"/>
    <property type="match status" value="1"/>
</dbReference>
<dbReference type="FunFam" id="2.10.60.10:FF:000024">
    <property type="entry name" value="Cytotoxin 1"/>
    <property type="match status" value="1"/>
</dbReference>
<dbReference type="Gene3D" id="2.10.60.10">
    <property type="entry name" value="CD59"/>
    <property type="match status" value="1"/>
</dbReference>
<dbReference type="InterPro" id="IPR003572">
    <property type="entry name" value="Cytotoxin_Cobra"/>
</dbReference>
<dbReference type="InterPro" id="IPR003571">
    <property type="entry name" value="Snake_3FTx"/>
</dbReference>
<dbReference type="InterPro" id="IPR045860">
    <property type="entry name" value="Snake_toxin-like_sf"/>
</dbReference>
<dbReference type="InterPro" id="IPR018354">
    <property type="entry name" value="Snake_toxin_con_site"/>
</dbReference>
<dbReference type="InterPro" id="IPR054131">
    <property type="entry name" value="Toxin_cobra-type"/>
</dbReference>
<dbReference type="Pfam" id="PF21947">
    <property type="entry name" value="Toxin_cobra-type"/>
    <property type="match status" value="1"/>
</dbReference>
<dbReference type="PRINTS" id="PR00282">
    <property type="entry name" value="CYTOTOXIN"/>
</dbReference>
<dbReference type="SUPFAM" id="SSF57302">
    <property type="entry name" value="Snake toxin-like"/>
    <property type="match status" value="1"/>
</dbReference>
<dbReference type="PROSITE" id="PS00272">
    <property type="entry name" value="SNAKE_TOXIN"/>
    <property type="match status" value="1"/>
</dbReference>
<evidence type="ECO:0000250" key="1"/>
<evidence type="ECO:0000250" key="2">
    <source>
        <dbReference type="UniProtKB" id="P60301"/>
    </source>
</evidence>
<evidence type="ECO:0000250" key="3">
    <source>
        <dbReference type="UniProtKB" id="P60304"/>
    </source>
</evidence>
<evidence type="ECO:0000305" key="4"/>
<protein>
    <recommendedName>
        <fullName>Cytotoxin 1a</fullName>
    </recommendedName>
    <alternativeName>
        <fullName>Cardiotoxin-1a</fullName>
    </alternativeName>
</protein>
<sequence length="81" mass="8976">MKTLLLTLVVVTIVCLDLGYTLKCNKLPPIASKTCPAGKNLCYKMFMMSDLTIPVKRGCIDVCPKNSLLVKYVCCNTDRCN</sequence>
<organism>
    <name type="scientific">Naja atra</name>
    <name type="common">Chinese cobra</name>
    <dbReference type="NCBI Taxonomy" id="8656"/>
    <lineage>
        <taxon>Eukaryota</taxon>
        <taxon>Metazoa</taxon>
        <taxon>Chordata</taxon>
        <taxon>Craniata</taxon>
        <taxon>Vertebrata</taxon>
        <taxon>Euteleostomi</taxon>
        <taxon>Lepidosauria</taxon>
        <taxon>Squamata</taxon>
        <taxon>Bifurcata</taxon>
        <taxon>Unidentata</taxon>
        <taxon>Episquamata</taxon>
        <taxon>Toxicofera</taxon>
        <taxon>Serpentes</taxon>
        <taxon>Colubroidea</taxon>
        <taxon>Elapidae</taxon>
        <taxon>Elapinae</taxon>
        <taxon>Naja</taxon>
    </lineage>
</organism>
<name>3SA1A_NAJAT</name>
<feature type="signal peptide" evidence="1">
    <location>
        <begin position="1"/>
        <end position="21"/>
    </location>
</feature>
<feature type="chain" id="PRO_0000035366" description="Cytotoxin 1a">
    <location>
        <begin position="22"/>
        <end position="81"/>
    </location>
</feature>
<feature type="disulfide bond" evidence="2">
    <location>
        <begin position="24"/>
        <end position="42"/>
    </location>
</feature>
<feature type="disulfide bond" evidence="2">
    <location>
        <begin position="35"/>
        <end position="59"/>
    </location>
</feature>
<feature type="disulfide bond" evidence="2">
    <location>
        <begin position="63"/>
        <end position="74"/>
    </location>
</feature>
<feature type="disulfide bond" evidence="2">
    <location>
        <begin position="75"/>
        <end position="80"/>
    </location>
</feature>
<comment type="function">
    <text evidence="2 3">Shows cytolytic activity on many different cells by forming pore in lipid membranes. In vivo, increases heart rate or kills the animal by cardiac arrest. In addition, it binds to heparin with high affinity, interacts with Kv channel-interacting protein 1 (KCNIP1) in a calcium-independent manner, and binds to integrin alpha-V/beta-3 (ITGAV/ITGB3) with moderate affinity.</text>
</comment>
<comment type="subunit">
    <text evidence="2">Monomer in solution; Homodimer and oligomer in the presence of negatively charged lipids forming a pore with a size ranging between 20 and 30 Angstroms.</text>
</comment>
<comment type="subcellular location">
    <subcellularLocation>
        <location evidence="1">Secreted</location>
    </subcellularLocation>
    <subcellularLocation>
        <location evidence="2">Target cell membrane</location>
    </subcellularLocation>
</comment>
<comment type="tissue specificity">
    <text evidence="4">Expressed by the venom gland.</text>
</comment>
<comment type="miscellaneous">
    <text evidence="4">Is classified as a S-type cytotoxin, since a serine residue stands at position 49 (Ser-29 in standard classification).</text>
</comment>
<comment type="similarity">
    <text evidence="4">Belongs to the three-finger toxin family. Short-chain subfamily. Type IA cytotoxin sub-subfamily.</text>
</comment>
<accession>Q98957</accession>